<name>MOB1A_MOUSE</name>
<proteinExistence type="evidence at transcript level"/>
<gene>
    <name type="primary">Mob1a</name>
    <name type="synonym">Mobk1b</name>
    <name type="synonym">Mobkl1b</name>
</gene>
<reference key="1">
    <citation type="journal article" date="2005" name="Science">
        <title>The transcriptional landscape of the mammalian genome.</title>
        <authorList>
            <person name="Carninci P."/>
            <person name="Kasukawa T."/>
            <person name="Katayama S."/>
            <person name="Gough J."/>
            <person name="Frith M.C."/>
            <person name="Maeda N."/>
            <person name="Oyama R."/>
            <person name="Ravasi T."/>
            <person name="Lenhard B."/>
            <person name="Wells C."/>
            <person name="Kodzius R."/>
            <person name="Shimokawa K."/>
            <person name="Bajic V.B."/>
            <person name="Brenner S.E."/>
            <person name="Batalov S."/>
            <person name="Forrest A.R."/>
            <person name="Zavolan M."/>
            <person name="Davis M.J."/>
            <person name="Wilming L.G."/>
            <person name="Aidinis V."/>
            <person name="Allen J.E."/>
            <person name="Ambesi-Impiombato A."/>
            <person name="Apweiler R."/>
            <person name="Aturaliya R.N."/>
            <person name="Bailey T.L."/>
            <person name="Bansal M."/>
            <person name="Baxter L."/>
            <person name="Beisel K.W."/>
            <person name="Bersano T."/>
            <person name="Bono H."/>
            <person name="Chalk A.M."/>
            <person name="Chiu K.P."/>
            <person name="Choudhary V."/>
            <person name="Christoffels A."/>
            <person name="Clutterbuck D.R."/>
            <person name="Crowe M.L."/>
            <person name="Dalla E."/>
            <person name="Dalrymple B.P."/>
            <person name="de Bono B."/>
            <person name="Della Gatta G."/>
            <person name="di Bernardo D."/>
            <person name="Down T."/>
            <person name="Engstrom P."/>
            <person name="Fagiolini M."/>
            <person name="Faulkner G."/>
            <person name="Fletcher C.F."/>
            <person name="Fukushima T."/>
            <person name="Furuno M."/>
            <person name="Futaki S."/>
            <person name="Gariboldi M."/>
            <person name="Georgii-Hemming P."/>
            <person name="Gingeras T.R."/>
            <person name="Gojobori T."/>
            <person name="Green R.E."/>
            <person name="Gustincich S."/>
            <person name="Harbers M."/>
            <person name="Hayashi Y."/>
            <person name="Hensch T.K."/>
            <person name="Hirokawa N."/>
            <person name="Hill D."/>
            <person name="Huminiecki L."/>
            <person name="Iacono M."/>
            <person name="Ikeo K."/>
            <person name="Iwama A."/>
            <person name="Ishikawa T."/>
            <person name="Jakt M."/>
            <person name="Kanapin A."/>
            <person name="Katoh M."/>
            <person name="Kawasawa Y."/>
            <person name="Kelso J."/>
            <person name="Kitamura H."/>
            <person name="Kitano H."/>
            <person name="Kollias G."/>
            <person name="Krishnan S.P."/>
            <person name="Kruger A."/>
            <person name="Kummerfeld S.K."/>
            <person name="Kurochkin I.V."/>
            <person name="Lareau L.F."/>
            <person name="Lazarevic D."/>
            <person name="Lipovich L."/>
            <person name="Liu J."/>
            <person name="Liuni S."/>
            <person name="McWilliam S."/>
            <person name="Madan Babu M."/>
            <person name="Madera M."/>
            <person name="Marchionni L."/>
            <person name="Matsuda H."/>
            <person name="Matsuzawa S."/>
            <person name="Miki H."/>
            <person name="Mignone F."/>
            <person name="Miyake S."/>
            <person name="Morris K."/>
            <person name="Mottagui-Tabar S."/>
            <person name="Mulder N."/>
            <person name="Nakano N."/>
            <person name="Nakauchi H."/>
            <person name="Ng P."/>
            <person name="Nilsson R."/>
            <person name="Nishiguchi S."/>
            <person name="Nishikawa S."/>
            <person name="Nori F."/>
            <person name="Ohara O."/>
            <person name="Okazaki Y."/>
            <person name="Orlando V."/>
            <person name="Pang K.C."/>
            <person name="Pavan W.J."/>
            <person name="Pavesi G."/>
            <person name="Pesole G."/>
            <person name="Petrovsky N."/>
            <person name="Piazza S."/>
            <person name="Reed J."/>
            <person name="Reid J.F."/>
            <person name="Ring B.Z."/>
            <person name="Ringwald M."/>
            <person name="Rost B."/>
            <person name="Ruan Y."/>
            <person name="Salzberg S.L."/>
            <person name="Sandelin A."/>
            <person name="Schneider C."/>
            <person name="Schoenbach C."/>
            <person name="Sekiguchi K."/>
            <person name="Semple C.A."/>
            <person name="Seno S."/>
            <person name="Sessa L."/>
            <person name="Sheng Y."/>
            <person name="Shibata Y."/>
            <person name="Shimada H."/>
            <person name="Shimada K."/>
            <person name="Silva D."/>
            <person name="Sinclair B."/>
            <person name="Sperling S."/>
            <person name="Stupka E."/>
            <person name="Sugiura K."/>
            <person name="Sultana R."/>
            <person name="Takenaka Y."/>
            <person name="Taki K."/>
            <person name="Tammoja K."/>
            <person name="Tan S.L."/>
            <person name="Tang S."/>
            <person name="Taylor M.S."/>
            <person name="Tegner J."/>
            <person name="Teichmann S.A."/>
            <person name="Ueda H.R."/>
            <person name="van Nimwegen E."/>
            <person name="Verardo R."/>
            <person name="Wei C.L."/>
            <person name="Yagi K."/>
            <person name="Yamanishi H."/>
            <person name="Zabarovsky E."/>
            <person name="Zhu S."/>
            <person name="Zimmer A."/>
            <person name="Hide W."/>
            <person name="Bult C."/>
            <person name="Grimmond S.M."/>
            <person name="Teasdale R.D."/>
            <person name="Liu E.T."/>
            <person name="Brusic V."/>
            <person name="Quackenbush J."/>
            <person name="Wahlestedt C."/>
            <person name="Mattick J.S."/>
            <person name="Hume D.A."/>
            <person name="Kai C."/>
            <person name="Sasaki D."/>
            <person name="Tomaru Y."/>
            <person name="Fukuda S."/>
            <person name="Kanamori-Katayama M."/>
            <person name="Suzuki M."/>
            <person name="Aoki J."/>
            <person name="Arakawa T."/>
            <person name="Iida J."/>
            <person name="Imamura K."/>
            <person name="Itoh M."/>
            <person name="Kato T."/>
            <person name="Kawaji H."/>
            <person name="Kawagashira N."/>
            <person name="Kawashima T."/>
            <person name="Kojima M."/>
            <person name="Kondo S."/>
            <person name="Konno H."/>
            <person name="Nakano K."/>
            <person name="Ninomiya N."/>
            <person name="Nishio T."/>
            <person name="Okada M."/>
            <person name="Plessy C."/>
            <person name="Shibata K."/>
            <person name="Shiraki T."/>
            <person name="Suzuki S."/>
            <person name="Tagami M."/>
            <person name="Waki K."/>
            <person name="Watahiki A."/>
            <person name="Okamura-Oho Y."/>
            <person name="Suzuki H."/>
            <person name="Kawai J."/>
            <person name="Hayashizaki Y."/>
        </authorList>
    </citation>
    <scope>NUCLEOTIDE SEQUENCE [LARGE SCALE MRNA] (ISOFORMS 1 AND 2)</scope>
    <source>
        <strain>C57BL/6J</strain>
        <strain>NOD</strain>
        <tissue>Fetal head</tissue>
        <tissue>Placenta</tissue>
        <tissue>Skin</tissue>
        <tissue>Spleen</tissue>
    </source>
</reference>
<reference key="2">
    <citation type="journal article" date="2004" name="Genome Res.">
        <title>The status, quality, and expansion of the NIH full-length cDNA project: the Mammalian Gene Collection (MGC).</title>
        <authorList>
            <consortium name="The MGC Project Team"/>
        </authorList>
    </citation>
    <scope>NUCLEOTIDE SEQUENCE [LARGE SCALE MRNA] (ISOFORM 1)</scope>
    <source>
        <strain>Czech II</strain>
        <strain>FVB/N</strain>
        <tissue>Mammary tumor</tissue>
    </source>
</reference>
<protein>
    <recommendedName>
        <fullName>MOB kinase activator 1A</fullName>
    </recommendedName>
    <alternativeName>
        <fullName>Mob1 homolog 1B</fullName>
    </alternativeName>
    <alternativeName>
        <fullName>Mps one binder kinase activator-like 1B</fullName>
    </alternativeName>
</protein>
<comment type="function">
    <text evidence="1">Activator of LATS1/2 in the Hippo signaling pathway which plays a pivotal role in organ size control and tumor suppression by restricting proliferation and promoting apoptosis. The core of this pathway is composed of a kinase cascade wherein STK3/MST2 and STK4/MST1, in complex with its regulatory protein SAV1, phosphorylates and activates LATS1/2 in complex with its regulatory protein MOB1, which in turn phosphorylates and inactivates YAP1 oncoprotein and WWTR1/TAZ. Phosphorylation of YAP1 by LATS1/2 inhibits its translocation into the nucleus to regulate cellular genes important for cell proliferation, cell death, and cell migration. Stimulates the kinase activity of STK38 and STK38L. Acts cooperatively with STK3/MST2 to activate STK38 (By similarity).</text>
</comment>
<comment type="subunit">
    <text evidence="1">Binds STK38 and STK38L. Interacts with LATS1 and LATS2 (By similarity). Forms a tripartite complex with STK38 and STK3/MST2 (By similarity).</text>
</comment>
<comment type="alternative products">
    <event type="alternative splicing"/>
    <isoform>
        <id>Q921Y0-1</id>
        <name>1</name>
        <sequence type="displayed"/>
    </isoform>
    <isoform>
        <id>Q921Y0-2</id>
        <name>2</name>
        <sequence type="described" ref="VSP_012297"/>
    </isoform>
</comment>
<comment type="PTM">
    <text evidence="1">Phosphorylated by STK3/MST2 and STK4/MST1 and this phosphorylation enhances its binding to LATS1.</text>
</comment>
<comment type="similarity">
    <text evidence="4">Belongs to the MOB1/phocein family.</text>
</comment>
<keyword id="KW-0007">Acetylation</keyword>
<keyword id="KW-0025">Alternative splicing</keyword>
<keyword id="KW-0479">Metal-binding</keyword>
<keyword id="KW-0597">Phosphoprotein</keyword>
<keyword id="KW-1185">Reference proteome</keyword>
<keyword id="KW-0862">Zinc</keyword>
<evidence type="ECO:0000250" key="1"/>
<evidence type="ECO:0000250" key="2">
    <source>
        <dbReference type="UniProtKB" id="Q9H8S9"/>
    </source>
</evidence>
<evidence type="ECO:0000303" key="3">
    <source>
    </source>
</evidence>
<evidence type="ECO:0000305" key="4"/>
<sequence>MSFLFSSRSSKTFKPKKNIPEGSHQYELLKHAEATLGSGNLRQAVMLPEGEDLNEWIAVNTVDFFNQINMLYGTITEFCTEASCPVMSAGPRYEYHWADGTNIKKPIKCSAPKYIDYLMTWVQDQLDDETLFPSKIGVPFPKNFMSVAKTILKRLFRVYAHIYHQHFDSVMQLQEEAHLNTSFKHFIFFVQEFNLIDRRELAPLQELIEKLGSKDR</sequence>
<accession>Q921Y0</accession>
<accession>Q3TJA6</accession>
<accession>Q8C194</accession>
<accession>Q8C1C7</accession>
<dbReference type="EMBL" id="AK028416">
    <property type="protein sequence ID" value="BAC25938.1"/>
    <property type="molecule type" value="mRNA"/>
</dbReference>
<dbReference type="EMBL" id="AK028695">
    <property type="protein sequence ID" value="BAC26070.1"/>
    <property type="molecule type" value="mRNA"/>
</dbReference>
<dbReference type="EMBL" id="AK167515">
    <property type="protein sequence ID" value="BAE39589.1"/>
    <property type="molecule type" value="mRNA"/>
</dbReference>
<dbReference type="EMBL" id="AK172205">
    <property type="protein sequence ID" value="BAE42880.1"/>
    <property type="molecule type" value="mRNA"/>
</dbReference>
<dbReference type="EMBL" id="BC009149">
    <property type="protein sequence ID" value="AAH09149.1"/>
    <property type="molecule type" value="mRNA"/>
</dbReference>
<dbReference type="EMBL" id="BC033463">
    <property type="protein sequence ID" value="AAH33463.1"/>
    <property type="molecule type" value="mRNA"/>
</dbReference>
<dbReference type="CCDS" id="CCDS39533.1">
    <molecule id="Q921Y0-1"/>
</dbReference>
<dbReference type="RefSeq" id="NP_001405107.1">
    <molecule id="Q921Y0-2"/>
    <property type="nucleotide sequence ID" value="NM_001418178.1"/>
</dbReference>
<dbReference type="RefSeq" id="NP_663546.1">
    <molecule id="Q921Y0-1"/>
    <property type="nucleotide sequence ID" value="NM_145571.3"/>
</dbReference>
<dbReference type="SMR" id="Q921Y0"/>
<dbReference type="BioGRID" id="231222">
    <property type="interactions" value="4"/>
</dbReference>
<dbReference type="FunCoup" id="Q921Y0">
    <property type="interactions" value="4234"/>
</dbReference>
<dbReference type="IntAct" id="Q921Y0">
    <property type="interactions" value="1"/>
</dbReference>
<dbReference type="STRING" id="10090.ENSMUSP00000054452"/>
<dbReference type="iPTMnet" id="Q921Y0"/>
<dbReference type="PhosphoSitePlus" id="Q921Y0"/>
<dbReference type="jPOST" id="Q921Y0"/>
<dbReference type="PaxDb" id="10090-ENSMUSP00000054452"/>
<dbReference type="PeptideAtlas" id="Q921Y0"/>
<dbReference type="ProteomicsDB" id="295648">
    <molecule id="Q921Y0-1"/>
</dbReference>
<dbReference type="ProteomicsDB" id="295649">
    <molecule id="Q921Y0-2"/>
</dbReference>
<dbReference type="Pumba" id="Q921Y0"/>
<dbReference type="Antibodypedia" id="47474">
    <property type="antibodies" value="184 antibodies from 31 providers"/>
</dbReference>
<dbReference type="DNASU" id="232157"/>
<dbReference type="Ensembl" id="ENSMUST00000038658.15">
    <molecule id="Q921Y0-2"/>
    <property type="protein sequence ID" value="ENSMUSP00000039115.9"/>
    <property type="gene ID" value="ENSMUSG00000043131.15"/>
</dbReference>
<dbReference type="Ensembl" id="ENSMUST00000055261.11">
    <molecule id="Q921Y0-1"/>
    <property type="protein sequence ID" value="ENSMUSP00000054452.5"/>
    <property type="gene ID" value="ENSMUSG00000043131.15"/>
</dbReference>
<dbReference type="Ensembl" id="ENSMUST00000101245.4">
    <molecule id="Q921Y0-1"/>
    <property type="protein sequence ID" value="ENSMUSP00000098802.3"/>
    <property type="gene ID" value="ENSMUSG00000043131.15"/>
</dbReference>
<dbReference type="GeneID" id="232157"/>
<dbReference type="KEGG" id="mmu:232157"/>
<dbReference type="UCSC" id="uc009cnf.1">
    <molecule id="Q921Y0-1"/>
    <property type="organism name" value="mouse"/>
</dbReference>
<dbReference type="UCSC" id="uc012eny.1">
    <molecule id="Q921Y0-2"/>
    <property type="organism name" value="mouse"/>
</dbReference>
<dbReference type="AGR" id="MGI:2442631"/>
<dbReference type="CTD" id="55233"/>
<dbReference type="MGI" id="MGI:2442631">
    <property type="gene designation" value="Mob1a"/>
</dbReference>
<dbReference type="VEuPathDB" id="HostDB:ENSMUSG00000043131"/>
<dbReference type="eggNOG" id="KOG0440">
    <property type="taxonomic scope" value="Eukaryota"/>
</dbReference>
<dbReference type="GeneTree" id="ENSGT01120000271863"/>
<dbReference type="HOGENOM" id="CLU_038321_3_1_1"/>
<dbReference type="InParanoid" id="Q921Y0"/>
<dbReference type="OMA" id="HKHAKAT"/>
<dbReference type="OrthoDB" id="8170117at2759"/>
<dbReference type="PhylomeDB" id="Q921Y0"/>
<dbReference type="TreeFam" id="TF300789"/>
<dbReference type="Reactome" id="R-MMU-2028269">
    <property type="pathway name" value="Signaling by Hippo"/>
</dbReference>
<dbReference type="BioGRID-ORCS" id="232157">
    <property type="hits" value="1 hit in 76 CRISPR screens"/>
</dbReference>
<dbReference type="ChiTaRS" id="Mob1a">
    <property type="organism name" value="mouse"/>
</dbReference>
<dbReference type="PRO" id="PR:Q921Y0"/>
<dbReference type="Proteomes" id="UP000000589">
    <property type="component" value="Chromosome 6"/>
</dbReference>
<dbReference type="RNAct" id="Q921Y0">
    <property type="molecule type" value="protein"/>
</dbReference>
<dbReference type="Bgee" id="ENSMUSG00000043131">
    <property type="expression patterns" value="Expressed in ileal epithelium and 257 other cell types or tissues"/>
</dbReference>
<dbReference type="ExpressionAtlas" id="Q921Y0">
    <property type="expression patterns" value="baseline and differential"/>
</dbReference>
<dbReference type="GO" id="GO:0005737">
    <property type="term" value="C:cytoplasm"/>
    <property type="evidence" value="ECO:0007669"/>
    <property type="project" value="Ensembl"/>
</dbReference>
<dbReference type="GO" id="GO:0046872">
    <property type="term" value="F:metal ion binding"/>
    <property type="evidence" value="ECO:0007669"/>
    <property type="project" value="UniProtKB-KW"/>
</dbReference>
<dbReference type="GO" id="GO:0043539">
    <property type="term" value="F:protein serine/threonine kinase activator activity"/>
    <property type="evidence" value="ECO:0007669"/>
    <property type="project" value="Ensembl"/>
</dbReference>
<dbReference type="GO" id="GO:0035329">
    <property type="term" value="P:hippo signaling"/>
    <property type="evidence" value="ECO:0007669"/>
    <property type="project" value="Ensembl"/>
</dbReference>
<dbReference type="FunFam" id="1.20.140.30:FF:000001">
    <property type="entry name" value="MOB kinase activator 1A"/>
    <property type="match status" value="1"/>
</dbReference>
<dbReference type="Gene3D" id="1.20.140.30">
    <property type="entry name" value="MOB kinase activator"/>
    <property type="match status" value="1"/>
</dbReference>
<dbReference type="InterPro" id="IPR005301">
    <property type="entry name" value="MOB_kinase_act_fam"/>
</dbReference>
<dbReference type="InterPro" id="IPR036703">
    <property type="entry name" value="MOB_kinase_act_sf"/>
</dbReference>
<dbReference type="PANTHER" id="PTHR22599">
    <property type="entry name" value="MPS ONE BINDER KINASE ACTIVATOR-LIKE MOB"/>
    <property type="match status" value="1"/>
</dbReference>
<dbReference type="Pfam" id="PF03637">
    <property type="entry name" value="Mob1_phocein"/>
    <property type="match status" value="1"/>
</dbReference>
<dbReference type="SMART" id="SM01388">
    <property type="entry name" value="Mob1_phocein"/>
    <property type="match status" value="1"/>
</dbReference>
<dbReference type="SUPFAM" id="SSF101152">
    <property type="entry name" value="Mob1/phocein"/>
    <property type="match status" value="1"/>
</dbReference>
<feature type="initiator methionine" description="Removed" evidence="2">
    <location>
        <position position="1"/>
    </location>
</feature>
<feature type="chain" id="PRO_0000193567" description="MOB kinase activator 1A">
    <location>
        <begin position="2"/>
        <end position="216"/>
    </location>
</feature>
<feature type="binding site" evidence="1">
    <location>
        <position position="79"/>
    </location>
    <ligand>
        <name>Zn(2+)</name>
        <dbReference type="ChEBI" id="CHEBI:29105"/>
    </ligand>
</feature>
<feature type="binding site" evidence="1">
    <location>
        <position position="84"/>
    </location>
    <ligand>
        <name>Zn(2+)</name>
        <dbReference type="ChEBI" id="CHEBI:29105"/>
    </ligand>
</feature>
<feature type="binding site" evidence="1">
    <location>
        <position position="161"/>
    </location>
    <ligand>
        <name>Zn(2+)</name>
        <dbReference type="ChEBI" id="CHEBI:29105"/>
    </ligand>
</feature>
<feature type="binding site" evidence="1">
    <location>
        <position position="166"/>
    </location>
    <ligand>
        <name>Zn(2+)</name>
        <dbReference type="ChEBI" id="CHEBI:29105"/>
    </ligand>
</feature>
<feature type="modified residue" description="N-acetylserine" evidence="2">
    <location>
        <position position="2"/>
    </location>
</feature>
<feature type="modified residue" description="Phosphothreonine" evidence="2">
    <location>
        <position position="12"/>
    </location>
</feature>
<feature type="modified residue" description="Phosphothreonine" evidence="2">
    <location>
        <position position="35"/>
    </location>
</feature>
<feature type="modified residue" description="Phosphothreonine; by STK3/MST2" evidence="2">
    <location>
        <position position="74"/>
    </location>
</feature>
<feature type="modified residue" description="Phosphothreonine" evidence="2">
    <location>
        <position position="181"/>
    </location>
</feature>
<feature type="splice variant" id="VSP_012297" description="In isoform 2." evidence="3">
    <original>TVDFFNQINMLYGTITEFCTEASCPVMSAGPRYEYHWADGTNIKKPIKCSAPKYIDYLMTWVQDQLDDETLFPSKIG</original>
    <variation>S</variation>
    <location>
        <begin position="61"/>
        <end position="137"/>
    </location>
</feature>
<feature type="sequence conflict" description="In Ref. 1; BAC25938." evidence="4" ref="1">
    <original>KP</original>
    <variation>NA</variation>
    <location>
        <begin position="105"/>
        <end position="106"/>
    </location>
</feature>
<organism>
    <name type="scientific">Mus musculus</name>
    <name type="common">Mouse</name>
    <dbReference type="NCBI Taxonomy" id="10090"/>
    <lineage>
        <taxon>Eukaryota</taxon>
        <taxon>Metazoa</taxon>
        <taxon>Chordata</taxon>
        <taxon>Craniata</taxon>
        <taxon>Vertebrata</taxon>
        <taxon>Euteleostomi</taxon>
        <taxon>Mammalia</taxon>
        <taxon>Eutheria</taxon>
        <taxon>Euarchontoglires</taxon>
        <taxon>Glires</taxon>
        <taxon>Rodentia</taxon>
        <taxon>Myomorpha</taxon>
        <taxon>Muroidea</taxon>
        <taxon>Muridae</taxon>
        <taxon>Murinae</taxon>
        <taxon>Mus</taxon>
        <taxon>Mus</taxon>
    </lineage>
</organism>